<gene>
    <name type="ordered locus">ML2433</name>
    <name type="ORF">B2168_C2_209</name>
</gene>
<keyword id="KW-1003">Cell membrane</keyword>
<keyword id="KW-0472">Membrane</keyword>
<keyword id="KW-1185">Reference proteome</keyword>
<keyword id="KW-0812">Transmembrane</keyword>
<keyword id="KW-1133">Transmembrane helix</keyword>
<evidence type="ECO:0000255" key="1"/>
<evidence type="ECO:0000305" key="2"/>
<organism>
    <name type="scientific">Mycobacterium leprae (strain TN)</name>
    <dbReference type="NCBI Taxonomy" id="272631"/>
    <lineage>
        <taxon>Bacteria</taxon>
        <taxon>Bacillati</taxon>
        <taxon>Actinomycetota</taxon>
        <taxon>Actinomycetes</taxon>
        <taxon>Mycobacteriales</taxon>
        <taxon>Mycobacteriaceae</taxon>
        <taxon>Mycobacterium</taxon>
    </lineage>
</organism>
<dbReference type="EMBL" id="U00018">
    <property type="protein sequence ID" value="AAA17231.1"/>
    <property type="status" value="ALT_FRAME"/>
    <property type="molecule type" value="Genomic_DNA"/>
</dbReference>
<dbReference type="EMBL" id="AL583925">
    <property type="protein sequence ID" value="CAC31950.1"/>
    <property type="molecule type" value="Genomic_DNA"/>
</dbReference>
<dbReference type="PIR" id="F87213">
    <property type="entry name" value="F87213"/>
</dbReference>
<dbReference type="PIR" id="S72895">
    <property type="entry name" value="S72895"/>
</dbReference>
<dbReference type="RefSeq" id="NP_302577.1">
    <property type="nucleotide sequence ID" value="NC_002677.1"/>
</dbReference>
<dbReference type="RefSeq" id="WP_010908896.1">
    <property type="nucleotide sequence ID" value="NC_002677.1"/>
</dbReference>
<dbReference type="SMR" id="P54580"/>
<dbReference type="STRING" id="272631.gene:17576296"/>
<dbReference type="KEGG" id="mle:ML2433"/>
<dbReference type="PATRIC" id="fig|272631.5.peg.4673"/>
<dbReference type="Leproma" id="ML2433"/>
<dbReference type="eggNOG" id="ENOG50348T2">
    <property type="taxonomic scope" value="Bacteria"/>
</dbReference>
<dbReference type="HOGENOM" id="CLU_778061_0_0_11"/>
<dbReference type="OrthoDB" id="4764613at2"/>
<dbReference type="Proteomes" id="UP000000806">
    <property type="component" value="Chromosome"/>
</dbReference>
<dbReference type="GO" id="GO:0005886">
    <property type="term" value="C:plasma membrane"/>
    <property type="evidence" value="ECO:0007669"/>
    <property type="project" value="UniProtKB-SubCell"/>
</dbReference>
<feature type="chain" id="PRO_0000103701" description="Uncharacterized protein ML2433">
    <location>
        <begin position="1"/>
        <end position="355"/>
    </location>
</feature>
<feature type="transmembrane region" description="Helical" evidence="1">
    <location>
        <begin position="275"/>
        <end position="295"/>
    </location>
</feature>
<feature type="transmembrane region" description="Helical" evidence="1">
    <location>
        <begin position="301"/>
        <end position="321"/>
    </location>
</feature>
<feature type="transmembrane region" description="Helical" evidence="1">
    <location>
        <begin position="330"/>
        <end position="350"/>
    </location>
</feature>
<feature type="sequence conflict" description="In Ref. 1." evidence="2" ref="1">
    <original>D</original>
    <variation>E</variation>
    <location>
        <position position="106"/>
    </location>
</feature>
<comment type="subcellular location">
    <subcellularLocation>
        <location evidence="2">Cell membrane</location>
        <topology evidence="2">Multi-pass membrane protein</topology>
    </subcellularLocation>
</comment>
<comment type="similarity">
    <text evidence="2">To M.tuberculosis Rv0497.</text>
</comment>
<comment type="sequence caution" evidence="2">
    <conflict type="frameshift">
        <sequence resource="EMBL-CDS" id="AAA17231"/>
    </conflict>
</comment>
<accession>P54580</accession>
<accession>Q9CB54</accession>
<proteinExistence type="predicted"/>
<reference key="1">
    <citation type="submission" date="1994-03" db="EMBL/GenBank/DDBJ databases">
        <authorList>
            <person name="Smith D.R."/>
            <person name="Robison K."/>
        </authorList>
    </citation>
    <scope>NUCLEOTIDE SEQUENCE [GENOMIC DNA]</scope>
</reference>
<reference key="2">
    <citation type="journal article" date="2001" name="Nature">
        <title>Massive gene decay in the leprosy bacillus.</title>
        <authorList>
            <person name="Cole S.T."/>
            <person name="Eiglmeier K."/>
            <person name="Parkhill J."/>
            <person name="James K.D."/>
            <person name="Thomson N.R."/>
            <person name="Wheeler P.R."/>
            <person name="Honore N."/>
            <person name="Garnier T."/>
            <person name="Churcher C.M."/>
            <person name="Harris D.E."/>
            <person name="Mungall K.L."/>
            <person name="Basham D."/>
            <person name="Brown D."/>
            <person name="Chillingworth T."/>
            <person name="Connor R."/>
            <person name="Davies R.M."/>
            <person name="Devlin K."/>
            <person name="Duthoy S."/>
            <person name="Feltwell T."/>
            <person name="Fraser A."/>
            <person name="Hamlin N."/>
            <person name="Holroyd S."/>
            <person name="Hornsby T."/>
            <person name="Jagels K."/>
            <person name="Lacroix C."/>
            <person name="Maclean J."/>
            <person name="Moule S."/>
            <person name="Murphy L.D."/>
            <person name="Oliver K."/>
            <person name="Quail M.A."/>
            <person name="Rajandream M.A."/>
            <person name="Rutherford K.M."/>
            <person name="Rutter S."/>
            <person name="Seeger K."/>
            <person name="Simon S."/>
            <person name="Simmonds M."/>
            <person name="Skelton J."/>
            <person name="Squares R."/>
            <person name="Squares S."/>
            <person name="Stevens K."/>
            <person name="Taylor K."/>
            <person name="Whitehead S."/>
            <person name="Woodward J.R."/>
            <person name="Barrell B.G."/>
        </authorList>
    </citation>
    <scope>NUCLEOTIDE SEQUENCE [LARGE SCALE GENOMIC DNA]</scope>
    <source>
        <strain>TN</strain>
    </source>
</reference>
<protein>
    <recommendedName>
        <fullName>Uncharacterized protein ML2433</fullName>
    </recommendedName>
</protein>
<sequence>MTGPHNDTESPHARPISVAELLARNGTIGAPAVSRRRRRRTDSDAVTVAELTCDIPIIHDDHADEQHLAATHAHRANIGVRVVEPAAQSPLEPVCEGIVAEPPVDDHGHVPPGCWSAPEPRWPKSPPLTHLRTGLQRSACSRPLPHLGDVRHPVAPDSIAQKQSDAEGMSPDPVEPFADIPVDVMGSEVRAAELVAEESAYARYNLQMSAGALFSGHTLTNELAERRGDEHAAGGLLAVGIDLDEDHLDLHTDLAGITSPARGWQSRFEALWRGSLIVLQSILAVVFGAGLFVAFDQLWRWNSIVALVLSVLVILGLVVGVRVVRRTEDIASTLIAVVVGALITLGPLALSLQSG</sequence>
<name>Y2433_MYCLE</name>